<protein>
    <recommendedName>
        <fullName evidence="1">Large ribosomal subunit protein bL31</fullName>
    </recommendedName>
    <alternativeName>
        <fullName evidence="2">50S ribosomal protein L31</fullName>
    </alternativeName>
</protein>
<proteinExistence type="inferred from homology"/>
<name>RL31_TRIV2</name>
<keyword id="KW-0687">Ribonucleoprotein</keyword>
<keyword id="KW-0689">Ribosomal protein</keyword>
<keyword id="KW-0694">RNA-binding</keyword>
<keyword id="KW-0699">rRNA-binding</keyword>
<accession>Q3MF92</accession>
<evidence type="ECO:0000255" key="1">
    <source>
        <dbReference type="HAMAP-Rule" id="MF_00501"/>
    </source>
</evidence>
<evidence type="ECO:0000305" key="2"/>
<sequence length="79" mass="9005">MAKSDIHPKWYPEAKVYCNGQVVMTVGSTKPELHVDVWSGNHPFYTGTQKIIDTEGRVERFLRKYGMSSTQTSGEQNKK</sequence>
<organism>
    <name type="scientific">Trichormus variabilis (strain ATCC 29413 / PCC 7937)</name>
    <name type="common">Anabaena variabilis</name>
    <dbReference type="NCBI Taxonomy" id="240292"/>
    <lineage>
        <taxon>Bacteria</taxon>
        <taxon>Bacillati</taxon>
        <taxon>Cyanobacteriota</taxon>
        <taxon>Cyanophyceae</taxon>
        <taxon>Nostocales</taxon>
        <taxon>Nostocaceae</taxon>
        <taxon>Trichormus</taxon>
    </lineage>
</organism>
<dbReference type="EMBL" id="CP000117">
    <property type="protein sequence ID" value="ABA20344.1"/>
    <property type="molecule type" value="Genomic_DNA"/>
</dbReference>
<dbReference type="STRING" id="240292.Ava_0720"/>
<dbReference type="KEGG" id="ava:Ava_0720"/>
<dbReference type="eggNOG" id="COG0254">
    <property type="taxonomic scope" value="Bacteria"/>
</dbReference>
<dbReference type="HOGENOM" id="CLU_114306_1_2_3"/>
<dbReference type="Proteomes" id="UP000002533">
    <property type="component" value="Chromosome"/>
</dbReference>
<dbReference type="GO" id="GO:1990904">
    <property type="term" value="C:ribonucleoprotein complex"/>
    <property type="evidence" value="ECO:0007669"/>
    <property type="project" value="UniProtKB-KW"/>
</dbReference>
<dbReference type="GO" id="GO:0005840">
    <property type="term" value="C:ribosome"/>
    <property type="evidence" value="ECO:0007669"/>
    <property type="project" value="UniProtKB-KW"/>
</dbReference>
<dbReference type="GO" id="GO:0019843">
    <property type="term" value="F:rRNA binding"/>
    <property type="evidence" value="ECO:0007669"/>
    <property type="project" value="UniProtKB-KW"/>
</dbReference>
<dbReference type="GO" id="GO:0003735">
    <property type="term" value="F:structural constituent of ribosome"/>
    <property type="evidence" value="ECO:0007669"/>
    <property type="project" value="InterPro"/>
</dbReference>
<dbReference type="GO" id="GO:0006412">
    <property type="term" value="P:translation"/>
    <property type="evidence" value="ECO:0007669"/>
    <property type="project" value="UniProtKB-UniRule"/>
</dbReference>
<dbReference type="Gene3D" id="4.10.830.30">
    <property type="entry name" value="Ribosomal protein L31"/>
    <property type="match status" value="1"/>
</dbReference>
<dbReference type="HAMAP" id="MF_00501">
    <property type="entry name" value="Ribosomal_bL31_1"/>
    <property type="match status" value="1"/>
</dbReference>
<dbReference type="InterPro" id="IPR034704">
    <property type="entry name" value="Ribosomal_bL28/bL31-like_sf"/>
</dbReference>
<dbReference type="InterPro" id="IPR002150">
    <property type="entry name" value="Ribosomal_bL31"/>
</dbReference>
<dbReference type="InterPro" id="IPR027491">
    <property type="entry name" value="Ribosomal_bL31_A"/>
</dbReference>
<dbReference type="InterPro" id="IPR042105">
    <property type="entry name" value="Ribosomal_bL31_sf"/>
</dbReference>
<dbReference type="NCBIfam" id="TIGR00105">
    <property type="entry name" value="L31"/>
    <property type="match status" value="1"/>
</dbReference>
<dbReference type="NCBIfam" id="NF000612">
    <property type="entry name" value="PRK00019.1"/>
    <property type="match status" value="1"/>
</dbReference>
<dbReference type="NCBIfam" id="NF001809">
    <property type="entry name" value="PRK00528.1"/>
    <property type="match status" value="1"/>
</dbReference>
<dbReference type="PANTHER" id="PTHR33280">
    <property type="entry name" value="50S RIBOSOMAL PROTEIN L31, CHLOROPLASTIC"/>
    <property type="match status" value="1"/>
</dbReference>
<dbReference type="PANTHER" id="PTHR33280:SF1">
    <property type="entry name" value="LARGE RIBOSOMAL SUBUNIT PROTEIN BL31C"/>
    <property type="match status" value="1"/>
</dbReference>
<dbReference type="Pfam" id="PF01197">
    <property type="entry name" value="Ribosomal_L31"/>
    <property type="match status" value="1"/>
</dbReference>
<dbReference type="PRINTS" id="PR01249">
    <property type="entry name" value="RIBOSOMALL31"/>
</dbReference>
<dbReference type="SUPFAM" id="SSF143800">
    <property type="entry name" value="L28p-like"/>
    <property type="match status" value="1"/>
</dbReference>
<dbReference type="PROSITE" id="PS01143">
    <property type="entry name" value="RIBOSOMAL_L31"/>
    <property type="match status" value="1"/>
</dbReference>
<reference key="1">
    <citation type="journal article" date="2014" name="Stand. Genomic Sci.">
        <title>Complete genome sequence of Anabaena variabilis ATCC 29413.</title>
        <authorList>
            <person name="Thiel T."/>
            <person name="Pratte B.S."/>
            <person name="Zhong J."/>
            <person name="Goodwin L."/>
            <person name="Copeland A."/>
            <person name="Lucas S."/>
            <person name="Han C."/>
            <person name="Pitluck S."/>
            <person name="Land M.L."/>
            <person name="Kyrpides N.C."/>
            <person name="Woyke T."/>
        </authorList>
    </citation>
    <scope>NUCLEOTIDE SEQUENCE [LARGE SCALE GENOMIC DNA]</scope>
    <source>
        <strain>ATCC 29413 / PCC 7937</strain>
    </source>
</reference>
<gene>
    <name evidence="1" type="primary">rpmE</name>
    <name evidence="1" type="synonym">rpl31</name>
    <name type="ordered locus">Ava_0720</name>
</gene>
<feature type="chain" id="PRO_0000259166" description="Large ribosomal subunit protein bL31">
    <location>
        <begin position="1"/>
        <end position="79"/>
    </location>
</feature>
<comment type="function">
    <text evidence="1">Binds the 23S rRNA.</text>
</comment>
<comment type="subunit">
    <text evidence="1">Part of the 50S ribosomal subunit.</text>
</comment>
<comment type="similarity">
    <text evidence="1">Belongs to the bacterial ribosomal protein bL31 family. Type A subfamily.</text>
</comment>